<keyword id="KW-0067">ATP-binding</keyword>
<keyword id="KW-0150">Chloroplast</keyword>
<keyword id="KW-0436">Ligase</keyword>
<keyword id="KW-0496">Mitochondrion</keyword>
<keyword id="KW-0547">Nucleotide-binding</keyword>
<keyword id="KW-0934">Plastid</keyword>
<keyword id="KW-0648">Protein biosynthesis</keyword>
<keyword id="KW-1185">Reference proteome</keyword>
<gene>
    <name evidence="1" type="primary">GATB</name>
    <name type="ordered locus">Ot11g02110</name>
</gene>
<evidence type="ECO:0000255" key="1">
    <source>
        <dbReference type="HAMAP-Rule" id="MF_03147"/>
    </source>
</evidence>
<accession>Q00YU3</accession>
<organism>
    <name type="scientific">Ostreococcus tauri</name>
    <dbReference type="NCBI Taxonomy" id="70448"/>
    <lineage>
        <taxon>Eukaryota</taxon>
        <taxon>Viridiplantae</taxon>
        <taxon>Chlorophyta</taxon>
        <taxon>Mamiellophyceae</taxon>
        <taxon>Mamiellales</taxon>
        <taxon>Bathycoccaceae</taxon>
        <taxon>Ostreococcus</taxon>
    </lineage>
</organism>
<sequence length="537" mass="57101">MSLASVAARRASSLRASTLVRTTFNRAIASASAGDALETVVGVEIHVRLQTRSKLFSGSASAYGGEPNSRVAPFDASLPGTLPVLNAGAVALAVKLGIALEGEVQLRSAFDRKHYWYADLPHGYQITQKRSPIVLGGVVRCQGNLSGDDAGDERSTDGALKVGIERVQLEMDTGKSSVAEDGRGTLVDLNRAGQALVEIVSEPDMRSGEEAVACVEALQRMLRYLHVSDANMEEGSLRCDVNVSVRTSEERARGVFGERVEIKNLNSLRSIARAVKYEAQRHAKVLAGGGKIERETRSFDVNTGKTVVLRTKENLLDYKFTPEPDLPSLVLTSADVEAIAGRMPELPNAAYERLVSGGASPSASNTIVAFPSTLKYFDVAMENCGAAKSADVANFIANEIIGAARKDAGATHKEPLSTLPRAASARRVGELLGKVADGTLSGRMAKQVLEALMNSDERALGDIVDDICGGGQISSDDHLRDICHSVVRDKPEEVRLLQGGKSKLMGALVGEVMKRTSGRANPKDVSKLLADIVAGEP</sequence>
<dbReference type="EC" id="6.3.5.-" evidence="1"/>
<dbReference type="EMBL" id="CAID01000011">
    <property type="protein sequence ID" value="CAL55816.1"/>
    <property type="molecule type" value="Genomic_DNA"/>
</dbReference>
<dbReference type="RefSeq" id="XP_003082013.1">
    <property type="nucleotide sequence ID" value="XM_003081965.1"/>
</dbReference>
<dbReference type="SMR" id="Q00YU3"/>
<dbReference type="STRING" id="70448.Q00YU3"/>
<dbReference type="GeneID" id="9833633"/>
<dbReference type="KEGG" id="ota:OT_ostta11g01930"/>
<dbReference type="eggNOG" id="KOG2438">
    <property type="taxonomic scope" value="Eukaryota"/>
</dbReference>
<dbReference type="InParanoid" id="Q00YU3"/>
<dbReference type="OMA" id="VGDANME"/>
<dbReference type="OrthoDB" id="495931at2759"/>
<dbReference type="Proteomes" id="UP000009170">
    <property type="component" value="Chromosome 11"/>
</dbReference>
<dbReference type="GO" id="GO:0009507">
    <property type="term" value="C:chloroplast"/>
    <property type="evidence" value="ECO:0007669"/>
    <property type="project" value="UniProtKB-SubCell"/>
</dbReference>
<dbReference type="GO" id="GO:0030956">
    <property type="term" value="C:glutamyl-tRNA(Gln) amidotransferase complex"/>
    <property type="evidence" value="ECO:0007669"/>
    <property type="project" value="UniProtKB-UniRule"/>
</dbReference>
<dbReference type="GO" id="GO:0005739">
    <property type="term" value="C:mitochondrion"/>
    <property type="evidence" value="ECO:0007669"/>
    <property type="project" value="UniProtKB-SubCell"/>
</dbReference>
<dbReference type="GO" id="GO:0005524">
    <property type="term" value="F:ATP binding"/>
    <property type="evidence" value="ECO:0007669"/>
    <property type="project" value="UniProtKB-KW"/>
</dbReference>
<dbReference type="GO" id="GO:0050567">
    <property type="term" value="F:glutaminyl-tRNA synthase (glutamine-hydrolyzing) activity"/>
    <property type="evidence" value="ECO:0007669"/>
    <property type="project" value="UniProtKB-UniRule"/>
</dbReference>
<dbReference type="GO" id="GO:0070681">
    <property type="term" value="P:glutaminyl-tRNAGln biosynthesis via transamidation"/>
    <property type="evidence" value="ECO:0007669"/>
    <property type="project" value="UniProtKB-UniRule"/>
</dbReference>
<dbReference type="GO" id="GO:0032543">
    <property type="term" value="P:mitochondrial translation"/>
    <property type="evidence" value="ECO:0007669"/>
    <property type="project" value="UniProtKB-UniRule"/>
</dbReference>
<dbReference type="FunFam" id="1.10.10.410:FF:000001">
    <property type="entry name" value="Aspartyl/glutamyl-tRNA(Asn/Gln) amidotransferase subunit B"/>
    <property type="match status" value="1"/>
</dbReference>
<dbReference type="Gene3D" id="1.10.10.410">
    <property type="match status" value="1"/>
</dbReference>
<dbReference type="HAMAP" id="MF_00121">
    <property type="entry name" value="GatB"/>
    <property type="match status" value="1"/>
</dbReference>
<dbReference type="InterPro" id="IPR017959">
    <property type="entry name" value="Asn/Gln-tRNA_amidoTrfase_suB/E"/>
</dbReference>
<dbReference type="InterPro" id="IPR006075">
    <property type="entry name" value="Asn/Gln-tRNA_Trfase_suB/E_cat"/>
</dbReference>
<dbReference type="InterPro" id="IPR018027">
    <property type="entry name" value="Asn/Gln_amidotransferase"/>
</dbReference>
<dbReference type="InterPro" id="IPR003789">
    <property type="entry name" value="Asn/Gln_tRNA_amidoTrase-B-like"/>
</dbReference>
<dbReference type="InterPro" id="IPR004413">
    <property type="entry name" value="GatB"/>
</dbReference>
<dbReference type="InterPro" id="IPR023168">
    <property type="entry name" value="GatB_Yqey_C_2"/>
</dbReference>
<dbReference type="InterPro" id="IPR017958">
    <property type="entry name" value="Gln-tRNA_amidoTrfase_suB_CS"/>
</dbReference>
<dbReference type="InterPro" id="IPR014746">
    <property type="entry name" value="Gln_synth/guanido_kin_cat_dom"/>
</dbReference>
<dbReference type="NCBIfam" id="TIGR00133">
    <property type="entry name" value="gatB"/>
    <property type="match status" value="1"/>
</dbReference>
<dbReference type="NCBIfam" id="NF004012">
    <property type="entry name" value="PRK05477.1-2"/>
    <property type="match status" value="1"/>
</dbReference>
<dbReference type="NCBIfam" id="NF004014">
    <property type="entry name" value="PRK05477.1-4"/>
    <property type="match status" value="1"/>
</dbReference>
<dbReference type="PANTHER" id="PTHR11659">
    <property type="entry name" value="GLUTAMYL-TRNA GLN AMIDOTRANSFERASE SUBUNIT B MITOCHONDRIAL AND PROKARYOTIC PET112-RELATED"/>
    <property type="match status" value="1"/>
</dbReference>
<dbReference type="PANTHER" id="PTHR11659:SF0">
    <property type="entry name" value="GLUTAMYL-TRNA(GLN) AMIDOTRANSFERASE SUBUNIT B, MITOCHONDRIAL"/>
    <property type="match status" value="1"/>
</dbReference>
<dbReference type="Pfam" id="PF02934">
    <property type="entry name" value="GatB_N"/>
    <property type="match status" value="1"/>
</dbReference>
<dbReference type="Pfam" id="PF02637">
    <property type="entry name" value="GatB_Yqey"/>
    <property type="match status" value="1"/>
</dbReference>
<dbReference type="SMART" id="SM00845">
    <property type="entry name" value="GatB_Yqey"/>
    <property type="match status" value="1"/>
</dbReference>
<dbReference type="SUPFAM" id="SSF89095">
    <property type="entry name" value="GatB/YqeY motif"/>
    <property type="match status" value="2"/>
</dbReference>
<dbReference type="SUPFAM" id="SSF55931">
    <property type="entry name" value="Glutamine synthetase/guanido kinase"/>
    <property type="match status" value="1"/>
</dbReference>
<dbReference type="PROSITE" id="PS01234">
    <property type="entry name" value="GATB"/>
    <property type="match status" value="1"/>
</dbReference>
<reference key="1">
    <citation type="journal article" date="2006" name="Proc. Natl. Acad. Sci. U.S.A.">
        <title>Genome analysis of the smallest free-living eukaryote Ostreococcus tauri unveils many unique features.</title>
        <authorList>
            <person name="Derelle E."/>
            <person name="Ferraz C."/>
            <person name="Rombauts S."/>
            <person name="Rouze P."/>
            <person name="Worden A.Z."/>
            <person name="Robbens S."/>
            <person name="Partensky F."/>
            <person name="Degroeve S."/>
            <person name="Echeynie S."/>
            <person name="Cooke R."/>
            <person name="Saeys Y."/>
            <person name="Wuyts J."/>
            <person name="Jabbari K."/>
            <person name="Bowler C."/>
            <person name="Panaud O."/>
            <person name="Piegu B."/>
            <person name="Ball S.G."/>
            <person name="Ral J.-P."/>
            <person name="Bouget F.-Y."/>
            <person name="Piganeau G."/>
            <person name="De Baets B."/>
            <person name="Picard A."/>
            <person name="Delseny M."/>
            <person name="Demaille J."/>
            <person name="Van de Peer Y."/>
            <person name="Moreau H."/>
        </authorList>
    </citation>
    <scope>NUCLEOTIDE SEQUENCE [LARGE SCALE GENOMIC DNA]</scope>
    <source>
        <strain>OTTH0595</strain>
    </source>
</reference>
<protein>
    <recommendedName>
        <fullName evidence="1">Glutamyl-tRNA(Gln) amidotransferase subunit B, chloroplastic/mitochondrial</fullName>
        <shortName evidence="1">Glu-AdT subunit B</shortName>
        <ecNumber evidence="1">6.3.5.-</ecNumber>
    </recommendedName>
</protein>
<feature type="chain" id="PRO_0000413232" description="Glutamyl-tRNA(Gln) amidotransferase subunit B, chloroplastic/mitochondrial">
    <location>
        <begin position="1"/>
        <end position="537"/>
    </location>
</feature>
<comment type="function">
    <text evidence="1">Allows the formation of correctly charged Gln-tRNA(Gln) through the transamidation of misacylated Glu-tRNA(Gln) in chloroplasts and mitochondria. The reaction takes place in the presence of glutamine and ATP through an activated gamma-phospho-Glu-tRNA(Gln).</text>
</comment>
<comment type="catalytic activity">
    <reaction evidence="1">
        <text>L-glutamyl-tRNA(Gln) + L-glutamine + ATP + H2O = L-glutaminyl-tRNA(Gln) + L-glutamate + ADP + phosphate + H(+)</text>
        <dbReference type="Rhea" id="RHEA:17521"/>
        <dbReference type="Rhea" id="RHEA-COMP:9681"/>
        <dbReference type="Rhea" id="RHEA-COMP:9684"/>
        <dbReference type="ChEBI" id="CHEBI:15377"/>
        <dbReference type="ChEBI" id="CHEBI:15378"/>
        <dbReference type="ChEBI" id="CHEBI:29985"/>
        <dbReference type="ChEBI" id="CHEBI:30616"/>
        <dbReference type="ChEBI" id="CHEBI:43474"/>
        <dbReference type="ChEBI" id="CHEBI:58359"/>
        <dbReference type="ChEBI" id="CHEBI:78520"/>
        <dbReference type="ChEBI" id="CHEBI:78521"/>
        <dbReference type="ChEBI" id="CHEBI:456216"/>
    </reaction>
</comment>
<comment type="subunit">
    <text evidence="1">Subunit of the heterotrimeric GatCAB amidotransferase (AdT) complex, composed of A, B and C subunits.</text>
</comment>
<comment type="subcellular location">
    <subcellularLocation>
        <location evidence="1">Mitochondrion</location>
    </subcellularLocation>
    <subcellularLocation>
        <location evidence="1">Plastid</location>
        <location evidence="1">Chloroplast</location>
    </subcellularLocation>
</comment>
<comment type="miscellaneous">
    <text evidence="1">This protein may be expected to contain an N-terminal transit peptide but none has been predicted.</text>
</comment>
<comment type="similarity">
    <text evidence="1">Belongs to the GatB/GatE family. GatB subfamily.</text>
</comment>
<name>GATB_OSTTA</name>
<proteinExistence type="inferred from homology"/>